<proteinExistence type="evidence at protein level"/>
<sequence>MALSLFTVGQFIFLFWTISITEANIDPAARAAAAAAASKAAVTAADAAAAAATIAASAASVAAATAADDAAASIATINAASAAAKSIAAAAAMAAKDTAAAAASAAAAAVASAAKALETINVKAAYAAATTANTAAAAAAATATTAAAAAAAKATIDNAAAAKAAAVATAVSDAAATAATAAAVAAATLEAAAAKAAATAVSAAAAAAAAAIAFAAAP</sequence>
<dbReference type="EMBL" id="EU188795">
    <property type="protein sequence ID" value="ABX38716.1"/>
    <property type="molecule type" value="mRNA"/>
</dbReference>
<dbReference type="PDB" id="4KE2">
    <property type="method" value="X-ray"/>
    <property type="resolution" value="1.80 A"/>
    <property type="chains" value="A/B/C=24-218"/>
</dbReference>
<dbReference type="PDBsum" id="4KE2"/>
<dbReference type="SMR" id="B1P0S1"/>
<dbReference type="DIP" id="DIP-61370N"/>
<dbReference type="EvolutionaryTrace" id="B1P0S1"/>
<dbReference type="GO" id="GO:0005576">
    <property type="term" value="C:extracellular region"/>
    <property type="evidence" value="ECO:0007669"/>
    <property type="project" value="UniProtKB-SubCell"/>
</dbReference>
<dbReference type="GO" id="GO:0016172">
    <property type="term" value="F:antifreeze activity"/>
    <property type="evidence" value="ECO:0007669"/>
    <property type="project" value="InterPro"/>
</dbReference>
<dbReference type="GO" id="GO:0042802">
    <property type="term" value="F:identical protein binding"/>
    <property type="evidence" value="ECO:0000353"/>
    <property type="project" value="IntAct"/>
</dbReference>
<dbReference type="Gene3D" id="6.10.140.1860">
    <property type="match status" value="1"/>
</dbReference>
<dbReference type="InterPro" id="IPR053767">
    <property type="entry name" value="AFP_Alpha-Hairpin_sf"/>
</dbReference>
<dbReference type="InterPro" id="IPR000104">
    <property type="entry name" value="Antifreeze_1"/>
</dbReference>
<dbReference type="PRINTS" id="PR00308">
    <property type="entry name" value="ANTIFREEZEI"/>
</dbReference>
<reference key="1">
    <citation type="journal article" date="2008" name="Biochemistry">
        <title>Hyperactive antifreeze protein from fish contains multiple ice-binding sites.</title>
        <authorList>
            <person name="Graham L.A."/>
            <person name="Marshall C.B."/>
            <person name="Lin F.H."/>
            <person name="Campbell R.L."/>
            <person name="Davies P.L."/>
        </authorList>
    </citation>
    <scope>NUCLEOTIDE SEQUENCE [MRNA]</scope>
    <scope>PROTEIN SEQUENCE OF 24-30</scope>
    <scope>SIGNAL PEPTIDE</scope>
    <scope>FUNCTION</scope>
    <scope>SUBUNIT</scope>
    <scope>TISSUE SPECIFICITY</scope>
    <source>
        <tissue>Liver</tissue>
    </source>
</reference>
<reference key="2">
    <citation type="journal article" date="2004" name="Nature">
        <title>Hyperactive antifreeze protein in a fish.</title>
        <authorList>
            <person name="Marshall C.B."/>
            <person name="Fletcher G.L."/>
            <person name="Davies P.L."/>
        </authorList>
    </citation>
    <scope>FUNCTION</scope>
    <scope>SUBCELLULAR LOCATION</scope>
    <scope>TISSUE SPECIFICITY</scope>
    <scope>BIOPHYSICOCHEMICAL PROPERTIES</scope>
</reference>
<reference key="3">
    <citation type="journal article" date="2005" name="J. Biol. Chem.">
        <title>Hyperactive antifreeze protein from winter flounder is a very long rod-like dimer of alpha-helices.</title>
        <authorList>
            <person name="Marshall C.B."/>
            <person name="Chakrabartty A."/>
            <person name="Davies P.L."/>
        </authorList>
    </citation>
    <scope>PROTEIN SEQUENCE OF 24-35</scope>
    <scope>SIGNAL PEPTIDE</scope>
    <scope>FUNCTION</scope>
    <scope>SUBUNIT</scope>
    <scope>SUBCELLULAR LOCATION</scope>
    <scope>TISSUE SPECIFICITY</scope>
    <scope>BIOPHYSICOCHEMICAL PROPERTIES</scope>
</reference>
<reference key="4">
    <citation type="journal article" date="2014" name="Science">
        <title>An antifreeze protein folds with an interior network of more than 400 semi-clathrate waters.</title>
        <authorList>
            <person name="Sun T."/>
            <person name="Lin F.H."/>
            <person name="Campbell R.L."/>
            <person name="Allingham J.S."/>
            <person name="Davies P.L."/>
        </authorList>
    </citation>
    <scope>X-RAY CRYSTALLOGRAPHY (1.8 ANGSTROMS) OF 24-218</scope>
    <scope>FUNCTION</scope>
    <scope>SUBUNIT</scope>
    <scope>DOMAIN</scope>
</reference>
<comment type="function">
    <text evidence="1 2 3 4">Contributes to protect fish blood from freezing at subzero sea water temperatures. Lowers the blood freezing point by about 1.1 degrees at a concentration of 0.1 mg/ml, and by about 1.5 degrees at a concentration of 0.2 mg/ml. Binds to nascent ice crystals and prevents further growth.</text>
</comment>
<comment type="biophysicochemical properties">
    <temperatureDependence>
        <text evidence="1 2">Thermolabile, displays irreversible loss of activity and aggregation at room temperature.</text>
    </temperatureDependence>
</comment>
<comment type="subunit">
    <text evidence="2 3 4">Homodimer.</text>
</comment>
<comment type="interaction">
    <interactant intactId="EBI-16093390">
        <id>B1P0S1</id>
    </interactant>
    <interactant intactId="EBI-16093390">
        <id>B1P0S1</id>
        <label>-</label>
    </interactant>
    <organismsDiffer>false</organismsDiffer>
    <experiments>3</experiments>
</comment>
<comment type="subcellular location">
    <subcellularLocation>
        <location evidence="1 2">Secreted</location>
    </subcellularLocation>
</comment>
<comment type="tissue specificity">
    <text evidence="1 2 3">Detected in blood serum (at protein level). Detected in liver.</text>
</comment>
<comment type="domain">
    <text evidence="4">The polypeptide has an alpha-hairpin structure. Two subunits dimerize to form a four-helix, rod-like structure. Each subunit is composed of a cap structure and of tandem 11 residue repeats with the sequence [TI]-X-X-X-A-X-X-X-A-X-X. Each repeat forms three helical turns with an average of 3.7 residues per turn, as opposed to 3.6 residues per turn for a classical alpha helix. Contrary to other proteins, where the protein core is stabilized by hydrophobic interactions and contains little water, this protein contains in its interior over 400 ordered water molecules with a semi-clathrate structure. Most likely, the interaction with the surface of ice crystals is mediated by bound water molecules that protrude between the helices.</text>
</comment>
<comment type="miscellaneous">
    <text>The concentration in blood serum is about 0.2 mg/ml.</text>
</comment>
<comment type="similarity">
    <text evidence="5">Belongs to the type-I AFP family.</text>
</comment>
<comment type="online information" name="Protein Spotlight">
    <link uri="https://www.proteinspotlight.org/back_issues/162/"/>
    <text>It did it its way - Issue 162 of July 2014</text>
</comment>
<keyword id="KW-0002">3D-structure</keyword>
<keyword id="KW-0047">Antifreeze protein</keyword>
<keyword id="KW-0903">Direct protein sequencing</keyword>
<keyword id="KW-0677">Repeat</keyword>
<keyword id="KW-0964">Secreted</keyword>
<keyword id="KW-0732">Signal</keyword>
<feature type="signal peptide" evidence="2 3">
    <location>
        <begin position="1"/>
        <end position="23"/>
    </location>
</feature>
<feature type="chain" id="PRO_5000320911" description="Antifreeze protein Maxi">
    <location>
        <begin position="24"/>
        <end position="218"/>
    </location>
</feature>
<feature type="helix" evidence="6">
    <location>
        <begin position="27"/>
        <end position="117"/>
    </location>
</feature>
<feature type="helix" evidence="6">
    <location>
        <begin position="123"/>
        <end position="216"/>
    </location>
</feature>
<evidence type="ECO:0000269" key="1">
    <source>
    </source>
</evidence>
<evidence type="ECO:0000269" key="2">
    <source>
    </source>
</evidence>
<evidence type="ECO:0000269" key="3">
    <source>
    </source>
</evidence>
<evidence type="ECO:0000269" key="4">
    <source>
    </source>
</evidence>
<evidence type="ECO:0000305" key="5"/>
<evidence type="ECO:0007829" key="6">
    <source>
        <dbReference type="PDB" id="4KE2"/>
    </source>
</evidence>
<protein>
    <recommendedName>
        <fullName>Antifreeze protein Maxi</fullName>
    </recommendedName>
    <alternativeName>
        <fullName>5a-like AFP</fullName>
    </alternativeName>
    <alternativeName>
        <fullName>Type 1 hyperactive antifreeze protein</fullName>
        <shortName>AFP Hyp-1</shortName>
    </alternativeName>
</protein>
<name>ANPM_PSEAM</name>
<organism>
    <name type="scientific">Pseudopleuronectes americanus</name>
    <name type="common">Winter flounder</name>
    <name type="synonym">Pleuronectes americanus</name>
    <dbReference type="NCBI Taxonomy" id="8265"/>
    <lineage>
        <taxon>Eukaryota</taxon>
        <taxon>Metazoa</taxon>
        <taxon>Chordata</taxon>
        <taxon>Craniata</taxon>
        <taxon>Vertebrata</taxon>
        <taxon>Euteleostomi</taxon>
        <taxon>Actinopterygii</taxon>
        <taxon>Neopterygii</taxon>
        <taxon>Teleostei</taxon>
        <taxon>Neoteleostei</taxon>
        <taxon>Acanthomorphata</taxon>
        <taxon>Carangaria</taxon>
        <taxon>Pleuronectiformes</taxon>
        <taxon>Pleuronectoidei</taxon>
        <taxon>Pleuronectidae</taxon>
        <taxon>Pseudopleuronectes</taxon>
    </lineage>
</organism>
<accession>B1P0S1</accession>